<keyword id="KW-0067">ATP-binding</keyword>
<keyword id="KW-0903">Direct protein sequencing</keyword>
<keyword id="KW-0418">Kinase</keyword>
<keyword id="KW-0547">Nucleotide-binding</keyword>
<keyword id="KW-0597">Phosphoprotein</keyword>
<keyword id="KW-1185">Reference proteome</keyword>
<keyword id="KW-0808">Transferase</keyword>
<accession>P0A6J1</accession>
<accession>P23846</accession>
<accession>P78105</accession>
<accession>Q2MA79</accession>
<accession>Q59376</accession>
<accession>Q59389</accession>
<comment type="function">
    <text>Catalyzes the synthesis of activated sulfate.</text>
</comment>
<comment type="catalytic activity">
    <reaction evidence="3">
        <text>adenosine 5'-phosphosulfate + ATP = 3'-phosphoadenylyl sulfate + ADP + H(+)</text>
        <dbReference type="Rhea" id="RHEA:24152"/>
        <dbReference type="ChEBI" id="CHEBI:15378"/>
        <dbReference type="ChEBI" id="CHEBI:30616"/>
        <dbReference type="ChEBI" id="CHEBI:58243"/>
        <dbReference type="ChEBI" id="CHEBI:58339"/>
        <dbReference type="ChEBI" id="CHEBI:456216"/>
        <dbReference type="EC" id="2.7.1.25"/>
    </reaction>
</comment>
<comment type="pathway">
    <text evidence="5">Sulfur metabolism; hydrogen sulfide biosynthesis; sulfite from sulfate: step 2/3.</text>
</comment>
<comment type="similarity">
    <text evidence="4">Belongs to the APS kinase family.</text>
</comment>
<protein>
    <recommendedName>
        <fullName>Adenylyl-sulfate kinase</fullName>
        <ecNumber evidence="3">2.7.1.25</ecNumber>
    </recommendedName>
    <alternativeName>
        <fullName>APS kinase</fullName>
    </alternativeName>
    <alternativeName>
        <fullName>ATP adenosine-5'-phosphosulfate 3'-phosphotransferase</fullName>
    </alternativeName>
    <alternativeName>
        <fullName>Adenosine-5'-phosphosulfate kinase</fullName>
    </alternativeName>
</protein>
<name>CYSC_ECOLI</name>
<gene>
    <name type="primary">cysC</name>
    <name type="ordered locus">b2750</name>
    <name type="ordered locus">JW2720</name>
</gene>
<sequence>MALHDENVVWHSHPVTVQQRELHHGHRGVVLWFTGLSGSGKSTVAGALEEALHKLGVSTYLLDGDNVRHGLCSDLGFSDADRKENIRRVGEVANLMVEAGLVVLTAFISPHRAERQMVRERVGEGRFIEVFVDTPLAICEARDPKGLYKKARAGELRNFTGIDSVYEAPESAEIHLNGEQLVTNLVQQLLDLLRQNDIIRS</sequence>
<dbReference type="EC" id="2.7.1.25" evidence="3"/>
<dbReference type="EMBL" id="M74586">
    <property type="protein sequence ID" value="AAA23647.1"/>
    <property type="molecule type" value="Genomic_DNA"/>
</dbReference>
<dbReference type="EMBL" id="M86936">
    <property type="protein sequence ID" value="AAA23503.1"/>
    <property type="molecule type" value="Genomic_DNA"/>
</dbReference>
<dbReference type="EMBL" id="U29579">
    <property type="protein sequence ID" value="AAA69260.1"/>
    <property type="molecule type" value="Genomic_DNA"/>
</dbReference>
<dbReference type="EMBL" id="U00096">
    <property type="protein sequence ID" value="AAC75792.1"/>
    <property type="molecule type" value="Genomic_DNA"/>
</dbReference>
<dbReference type="EMBL" id="AP009048">
    <property type="protein sequence ID" value="BAE76827.1"/>
    <property type="molecule type" value="Genomic_DNA"/>
</dbReference>
<dbReference type="PIR" id="B65056">
    <property type="entry name" value="B65056"/>
</dbReference>
<dbReference type="RefSeq" id="NP_417230.1">
    <property type="nucleotide sequence ID" value="NC_000913.3"/>
</dbReference>
<dbReference type="RefSeq" id="WP_001173673.1">
    <property type="nucleotide sequence ID" value="NZ_STEB01000027.1"/>
</dbReference>
<dbReference type="SMR" id="P0A6J1"/>
<dbReference type="BioGRID" id="4263423">
    <property type="interactions" value="30"/>
</dbReference>
<dbReference type="FunCoup" id="P0A6J1">
    <property type="interactions" value="228"/>
</dbReference>
<dbReference type="IntAct" id="P0A6J1">
    <property type="interactions" value="11"/>
</dbReference>
<dbReference type="STRING" id="511145.b2750"/>
<dbReference type="PaxDb" id="511145-b2750"/>
<dbReference type="EnsemblBacteria" id="AAC75792">
    <property type="protein sequence ID" value="AAC75792"/>
    <property type="gene ID" value="b2750"/>
</dbReference>
<dbReference type="GeneID" id="93779256"/>
<dbReference type="GeneID" id="947221"/>
<dbReference type="KEGG" id="ecj:JW2720"/>
<dbReference type="KEGG" id="eco:b2750"/>
<dbReference type="KEGG" id="ecoc:C3026_15120"/>
<dbReference type="PATRIC" id="fig|1411691.4.peg.3990"/>
<dbReference type="EchoBASE" id="EB0182"/>
<dbReference type="eggNOG" id="COG0529">
    <property type="taxonomic scope" value="Bacteria"/>
</dbReference>
<dbReference type="HOGENOM" id="CLU_046932_1_0_6"/>
<dbReference type="InParanoid" id="P0A6J1"/>
<dbReference type="OMA" id="HENTVEE"/>
<dbReference type="OrthoDB" id="9804504at2"/>
<dbReference type="PhylomeDB" id="P0A6J1"/>
<dbReference type="BioCyc" id="EcoCyc:ADENYLYLSULFKIN-MONOMER"/>
<dbReference type="BioCyc" id="MetaCyc:ADENYLYLSULFKIN-MONOMER"/>
<dbReference type="UniPathway" id="UPA00140">
    <property type="reaction ID" value="UER00205"/>
</dbReference>
<dbReference type="PRO" id="PR:P0A6J1"/>
<dbReference type="Proteomes" id="UP000000625">
    <property type="component" value="Chromosome"/>
</dbReference>
<dbReference type="GO" id="GO:0004020">
    <property type="term" value="F:adenylylsulfate kinase activity"/>
    <property type="evidence" value="ECO:0000314"/>
    <property type="project" value="EcoCyc"/>
</dbReference>
<dbReference type="GO" id="GO:0005524">
    <property type="term" value="F:ATP binding"/>
    <property type="evidence" value="ECO:0007669"/>
    <property type="project" value="UniProtKB-UniRule"/>
</dbReference>
<dbReference type="GO" id="GO:0042802">
    <property type="term" value="F:identical protein binding"/>
    <property type="evidence" value="ECO:0000314"/>
    <property type="project" value="EcoCyc"/>
</dbReference>
<dbReference type="GO" id="GO:0070814">
    <property type="term" value="P:hydrogen sulfide biosynthetic process"/>
    <property type="evidence" value="ECO:0007669"/>
    <property type="project" value="UniProtKB-UniRule"/>
</dbReference>
<dbReference type="GO" id="GO:0000103">
    <property type="term" value="P:sulfate assimilation"/>
    <property type="evidence" value="ECO:0000318"/>
    <property type="project" value="GO_Central"/>
</dbReference>
<dbReference type="CDD" id="cd02027">
    <property type="entry name" value="APSK"/>
    <property type="match status" value="1"/>
</dbReference>
<dbReference type="FunFam" id="3.40.50.300:FF:000212">
    <property type="entry name" value="Adenylyl-sulfate kinase"/>
    <property type="match status" value="1"/>
</dbReference>
<dbReference type="Gene3D" id="3.40.50.300">
    <property type="entry name" value="P-loop containing nucleotide triphosphate hydrolases"/>
    <property type="match status" value="1"/>
</dbReference>
<dbReference type="HAMAP" id="MF_00065">
    <property type="entry name" value="Adenylyl_sulf_kinase"/>
    <property type="match status" value="1"/>
</dbReference>
<dbReference type="InterPro" id="IPR002891">
    <property type="entry name" value="APS_kinase"/>
</dbReference>
<dbReference type="InterPro" id="IPR027417">
    <property type="entry name" value="P-loop_NTPase"/>
</dbReference>
<dbReference type="NCBIfam" id="TIGR00455">
    <property type="entry name" value="apsK"/>
    <property type="match status" value="1"/>
</dbReference>
<dbReference type="NCBIfam" id="NF003013">
    <property type="entry name" value="PRK03846.1"/>
    <property type="match status" value="1"/>
</dbReference>
<dbReference type="PANTHER" id="PTHR11055:SF63">
    <property type="entry name" value="ADENYLYL-SULFATE KINASE 1, CHLOROPLASTIC"/>
    <property type="match status" value="1"/>
</dbReference>
<dbReference type="PANTHER" id="PTHR11055">
    <property type="entry name" value="BIFUNCTIONAL 3'-PHOSPHOADENOSINE 5'-PHOSPHOSULFATE SYNTHASE"/>
    <property type="match status" value="1"/>
</dbReference>
<dbReference type="Pfam" id="PF01583">
    <property type="entry name" value="APS_kinase"/>
    <property type="match status" value="1"/>
</dbReference>
<dbReference type="SUPFAM" id="SSF52540">
    <property type="entry name" value="P-loop containing nucleoside triphosphate hydrolases"/>
    <property type="match status" value="1"/>
</dbReference>
<feature type="initiator methionine" description="Removed" evidence="2">
    <location>
        <position position="1"/>
    </location>
</feature>
<feature type="chain" id="PRO_0000105909" description="Adenylyl-sulfate kinase">
    <location>
        <begin position="2"/>
        <end position="201"/>
    </location>
</feature>
<feature type="active site" description="Phosphoserine intermediate" evidence="3">
    <location>
        <position position="109"/>
    </location>
</feature>
<feature type="binding site" evidence="1">
    <location>
        <begin position="35"/>
        <end position="42"/>
    </location>
    <ligand>
        <name>ATP</name>
        <dbReference type="ChEBI" id="CHEBI:30616"/>
    </ligand>
</feature>
<feature type="sequence conflict" description="In Ref. 1; AAA23647." evidence="4" ref="1">
    <original>T</original>
    <variation>Q</variation>
    <location>
        <position position="134"/>
    </location>
</feature>
<evidence type="ECO:0000250" key="1"/>
<evidence type="ECO:0000269" key="2">
    <source>
    </source>
</evidence>
<evidence type="ECO:0000269" key="3">
    <source>
    </source>
</evidence>
<evidence type="ECO:0000305" key="4"/>
<evidence type="ECO:0000305" key="5">
    <source>
    </source>
</evidence>
<proteinExistence type="evidence at protein level"/>
<reference key="1">
    <citation type="journal article" date="1992" name="J. Biol. Chem.">
        <title>The DNA sequence of the sulfate activation locus from Escherichia coli K-12.</title>
        <authorList>
            <person name="Leyh T.S."/>
            <person name="Vogt T.F."/>
            <person name="Suo Y."/>
        </authorList>
    </citation>
    <scope>NUCLEOTIDE SEQUENCE [GENOMIC DNA]</scope>
    <scope>PROTEIN SEQUENCE OF 2-9</scope>
    <source>
        <strain>K12</strain>
    </source>
</reference>
<reference key="2">
    <citation type="journal article" date="1992" name="Biochemistry">
        <title>Characterization of the phosphorylated enzyme intermediate formed in the adenosine 5'-phosphosulfate kinase reaction.</title>
        <authorList>
            <person name="Satishchandran C."/>
            <person name="Hickman Y.N."/>
            <person name="Markham G.D."/>
        </authorList>
    </citation>
    <scope>NUCLEOTIDE SEQUENCE [GENOMIC DNA]</scope>
    <scope>CHARACTERIZATION</scope>
    <scope>ACTIVE SITE</scope>
    <scope>CATALYTIC ACTIVITY</scope>
</reference>
<reference key="3">
    <citation type="journal article" date="1997" name="Science">
        <title>The complete genome sequence of Escherichia coli K-12.</title>
        <authorList>
            <person name="Blattner F.R."/>
            <person name="Plunkett G. III"/>
            <person name="Bloch C.A."/>
            <person name="Perna N.T."/>
            <person name="Burland V."/>
            <person name="Riley M."/>
            <person name="Collado-Vides J."/>
            <person name="Glasner J.D."/>
            <person name="Rode C.K."/>
            <person name="Mayhew G.F."/>
            <person name="Gregor J."/>
            <person name="Davis N.W."/>
            <person name="Kirkpatrick H.A."/>
            <person name="Goeden M.A."/>
            <person name="Rose D.J."/>
            <person name="Mau B."/>
            <person name="Shao Y."/>
        </authorList>
    </citation>
    <scope>NUCLEOTIDE SEQUENCE [LARGE SCALE GENOMIC DNA]</scope>
    <source>
        <strain>K12 / MG1655 / ATCC 47076</strain>
    </source>
</reference>
<reference key="4">
    <citation type="journal article" date="2006" name="Mol. Syst. Biol.">
        <title>Highly accurate genome sequences of Escherichia coli K-12 strains MG1655 and W3110.</title>
        <authorList>
            <person name="Hayashi K."/>
            <person name="Morooka N."/>
            <person name="Yamamoto Y."/>
            <person name="Fujita K."/>
            <person name="Isono K."/>
            <person name="Choi S."/>
            <person name="Ohtsubo E."/>
            <person name="Baba T."/>
            <person name="Wanner B.L."/>
            <person name="Mori H."/>
            <person name="Horiuchi T."/>
        </authorList>
    </citation>
    <scope>NUCLEOTIDE SEQUENCE [LARGE SCALE GENOMIC DNA]</scope>
    <source>
        <strain>K12 / W3110 / ATCC 27325 / DSM 5911</strain>
    </source>
</reference>
<reference key="5">
    <citation type="journal article" date="1988" name="J. Biol. Chem.">
        <title>The sulfate activation locus of Escherichia coli K12: cloning, genetic, and enzymatic characterization.</title>
        <authorList>
            <person name="Leyh T.S."/>
            <person name="Taylor J.C."/>
            <person name="Markham G.D."/>
        </authorList>
    </citation>
    <scope>CHARACTERIZATION</scope>
</reference>
<organism>
    <name type="scientific">Escherichia coli (strain K12)</name>
    <dbReference type="NCBI Taxonomy" id="83333"/>
    <lineage>
        <taxon>Bacteria</taxon>
        <taxon>Pseudomonadati</taxon>
        <taxon>Pseudomonadota</taxon>
        <taxon>Gammaproteobacteria</taxon>
        <taxon>Enterobacterales</taxon>
        <taxon>Enterobacteriaceae</taxon>
        <taxon>Escherichia</taxon>
    </lineage>
</organism>